<gene>
    <name type="ordered locus">TTHA0961</name>
</gene>
<protein>
    <recommendedName>
        <fullName evidence="2">4-hydroxyphenylacetate 3-monooxygenase, reductase component</fullName>
        <ecNumber evidence="1">1.5.1.36</ecNumber>
    </recommendedName>
    <alternativeName>
        <fullName>4-HPA 3-monooxygenase small component</fullName>
    </alternativeName>
    <alternativeName>
        <fullName>Flavin:NADH reductase</fullName>
    </alternativeName>
</protein>
<dbReference type="EC" id="1.5.1.36" evidence="1"/>
<dbReference type="EMBL" id="AP008226">
    <property type="protein sequence ID" value="BAD70784.1"/>
    <property type="molecule type" value="Genomic_DNA"/>
</dbReference>
<dbReference type="RefSeq" id="YP_144227.1">
    <property type="nucleotide sequence ID" value="NC_006461.1"/>
</dbReference>
<dbReference type="PDB" id="2ECR">
    <property type="method" value="X-ray"/>
    <property type="resolution" value="1.60 A"/>
    <property type="chains" value="A/B=1-149"/>
</dbReference>
<dbReference type="PDB" id="2ECU">
    <property type="method" value="X-ray"/>
    <property type="resolution" value="1.30 A"/>
    <property type="chains" value="A/B=1-149"/>
</dbReference>
<dbReference type="PDB" id="2ED4">
    <property type="method" value="X-ray"/>
    <property type="resolution" value="1.85 A"/>
    <property type="chains" value="A/B=1-149"/>
</dbReference>
<dbReference type="PDBsum" id="2ECR"/>
<dbReference type="PDBsum" id="2ECU"/>
<dbReference type="PDBsum" id="2ED4"/>
<dbReference type="SMR" id="Q5SJP7"/>
<dbReference type="EnsemblBacteria" id="BAD70784">
    <property type="protein sequence ID" value="BAD70784"/>
    <property type="gene ID" value="BAD70784"/>
</dbReference>
<dbReference type="GeneID" id="3170068"/>
<dbReference type="KEGG" id="ttj:TTHA0961"/>
<dbReference type="PATRIC" id="fig|300852.9.peg.943"/>
<dbReference type="eggNOG" id="COG1853">
    <property type="taxonomic scope" value="Bacteria"/>
</dbReference>
<dbReference type="HOGENOM" id="CLU_059021_1_4_0"/>
<dbReference type="PhylomeDB" id="Q5SJP7"/>
<dbReference type="SABIO-RK" id="Q5SJP7"/>
<dbReference type="UniPathway" id="UPA00208">
    <property type="reaction ID" value="UER00416"/>
</dbReference>
<dbReference type="EvolutionaryTrace" id="Q5SJP7"/>
<dbReference type="Proteomes" id="UP000000532">
    <property type="component" value="Chromosome"/>
</dbReference>
<dbReference type="GO" id="GO:0036382">
    <property type="term" value="F:flavin reductase (NADH) activity"/>
    <property type="evidence" value="ECO:0007669"/>
    <property type="project" value="UniProtKB-EC"/>
</dbReference>
<dbReference type="GO" id="GO:0010181">
    <property type="term" value="F:FMN binding"/>
    <property type="evidence" value="ECO:0007669"/>
    <property type="project" value="InterPro"/>
</dbReference>
<dbReference type="GO" id="GO:0042602">
    <property type="term" value="F:riboflavin reductase (NADPH) activity"/>
    <property type="evidence" value="ECO:0007669"/>
    <property type="project" value="TreeGrafter"/>
</dbReference>
<dbReference type="GO" id="GO:0006208">
    <property type="term" value="P:pyrimidine nucleobase catabolic process"/>
    <property type="evidence" value="ECO:0007669"/>
    <property type="project" value="TreeGrafter"/>
</dbReference>
<dbReference type="Gene3D" id="2.30.110.10">
    <property type="entry name" value="Electron Transport, Fmn-binding Protein, Chain A"/>
    <property type="match status" value="1"/>
</dbReference>
<dbReference type="InterPro" id="IPR002563">
    <property type="entry name" value="Flavin_Rdtase-like_dom"/>
</dbReference>
<dbReference type="InterPro" id="IPR050268">
    <property type="entry name" value="NADH-dep_flavin_reductase"/>
</dbReference>
<dbReference type="InterPro" id="IPR053664">
    <property type="entry name" value="NFP_flavin_reductase"/>
</dbReference>
<dbReference type="InterPro" id="IPR012349">
    <property type="entry name" value="Split_barrel_FMN-bd"/>
</dbReference>
<dbReference type="NCBIfam" id="NF042921">
    <property type="entry name" value="HpaC_Thermus"/>
    <property type="match status" value="1"/>
</dbReference>
<dbReference type="PANTHER" id="PTHR30466">
    <property type="entry name" value="FLAVIN REDUCTASE"/>
    <property type="match status" value="1"/>
</dbReference>
<dbReference type="PANTHER" id="PTHR30466:SF1">
    <property type="entry name" value="FMN REDUCTASE (NADH) RUTF"/>
    <property type="match status" value="1"/>
</dbReference>
<dbReference type="Pfam" id="PF01613">
    <property type="entry name" value="Flavin_Reduct"/>
    <property type="match status" value="1"/>
</dbReference>
<dbReference type="SMART" id="SM00903">
    <property type="entry name" value="Flavin_Reduct"/>
    <property type="match status" value="1"/>
</dbReference>
<dbReference type="SUPFAM" id="SSF50475">
    <property type="entry name" value="FMN-binding split barrel"/>
    <property type="match status" value="1"/>
</dbReference>
<accession>Q5SJP7</accession>
<organism>
    <name type="scientific">Thermus thermophilus (strain ATCC 27634 / DSM 579 / HB8)</name>
    <dbReference type="NCBI Taxonomy" id="300852"/>
    <lineage>
        <taxon>Bacteria</taxon>
        <taxon>Thermotogati</taxon>
        <taxon>Deinococcota</taxon>
        <taxon>Deinococci</taxon>
        <taxon>Thermales</taxon>
        <taxon>Thermaceae</taxon>
        <taxon>Thermus</taxon>
    </lineage>
</organism>
<evidence type="ECO:0000269" key="1">
    <source>
    </source>
</evidence>
<evidence type="ECO:0000303" key="2">
    <source>
    </source>
</evidence>
<evidence type="ECO:0000305" key="3"/>
<evidence type="ECO:0000305" key="4">
    <source>
    </source>
</evidence>
<evidence type="ECO:0007744" key="5">
    <source>
        <dbReference type="PDB" id="2ED4"/>
    </source>
</evidence>
<evidence type="ECO:0007829" key="6">
    <source>
        <dbReference type="PDB" id="2ECU"/>
    </source>
</evidence>
<keyword id="KW-0002">3D-structure</keyword>
<keyword id="KW-0058">Aromatic hydrocarbons catabolism</keyword>
<keyword id="KW-0274">FAD</keyword>
<keyword id="KW-0285">Flavoprotein</keyword>
<keyword id="KW-0288">FMN</keyword>
<keyword id="KW-0520">NAD</keyword>
<keyword id="KW-0560">Oxidoreductase</keyword>
<keyword id="KW-1185">Reference proteome</keyword>
<reference key="1">
    <citation type="submission" date="2004-11" db="EMBL/GenBank/DDBJ databases">
        <title>Complete genome sequence of Thermus thermophilus HB8.</title>
        <authorList>
            <person name="Masui R."/>
            <person name="Kurokawa K."/>
            <person name="Nakagawa N."/>
            <person name="Tokunaga F."/>
            <person name="Koyama Y."/>
            <person name="Shibata T."/>
            <person name="Oshima T."/>
            <person name="Yokoyama S."/>
            <person name="Yasunaga T."/>
            <person name="Kuramitsu S."/>
        </authorList>
    </citation>
    <scope>NUCLEOTIDE SEQUENCE [LARGE SCALE GENOMIC DNA]</scope>
    <source>
        <strain>ATCC 27634 / DSM 579 / HB8</strain>
    </source>
</reference>
<reference key="2">
    <citation type="journal article" date="2008" name="Proteins">
        <title>Crystal structure of the flavin reductase component (hpaC) of 4-hydroxyphenylacetate 3-monooxygenase from Thermus thermophilus HB8: Structural basis for the flavin affinity.</title>
        <authorList>
            <person name="Kim S.-H."/>
            <person name="Hisano T."/>
            <person name="Iwasaki W."/>
            <person name="Ebihara A."/>
            <person name="Miki K."/>
        </authorList>
    </citation>
    <scope>X-RAY CRYSTALLOGRAPHY (1.6 ANGSTROMS) IN COMPLEX WITH FAD AND NAD</scope>
    <scope>FUNCTION</scope>
    <scope>CATALYTIC ACTIVITY</scope>
    <scope>BIOPHYSICOCHEMICAL PROPERTIES</scope>
    <scope>PATHWAY</scope>
    <scope>SUBUNIT</scope>
    <scope>SUBSTRATE SPECIFICITY</scope>
</reference>
<comment type="function">
    <text evidence="1">Catalyzes the reduction of free flavins (FMN, FAD and riboflavin) by NADH. Subsequently, the reduced flavins diffuse to the large HpaB component. It utilizes NADH, but not NADPH as an electron donor, and both FAD and FMN as electron acceptors.</text>
</comment>
<comment type="catalytic activity">
    <reaction evidence="1">
        <text>a reduced flavin + NAD(+) = an oxidized flavin + NADH + 2 H(+)</text>
        <dbReference type="Rhea" id="RHEA:31303"/>
        <dbReference type="ChEBI" id="CHEBI:15378"/>
        <dbReference type="ChEBI" id="CHEBI:57540"/>
        <dbReference type="ChEBI" id="CHEBI:57945"/>
        <dbReference type="ChEBI" id="CHEBI:60531"/>
        <dbReference type="ChEBI" id="CHEBI:62787"/>
        <dbReference type="EC" id="1.5.1.36"/>
    </reaction>
</comment>
<comment type="biophysicochemical properties">
    <kinetics>
        <KM evidence="1">8.9 uM for FAD (at 30 degrees Celsius and pH 7.0)</KM>
        <KM evidence="1">36.8 uM for FMN (at 30 degrees Celsius and pH 7.0)</KM>
    </kinetics>
</comment>
<comment type="pathway">
    <text evidence="4">Aromatic compound metabolism; 4-hydroxyphenylacetate degradation; pyruvate and succinate semialdehyde from 4-hydroxyphenylacetate: step 1/7.</text>
</comment>
<comment type="subunit">
    <text evidence="1">Homodimer. 4-HPA 3-monooxygenase consists of a reductase component HpaC and an oxygenase component HpaB.</text>
</comment>
<comment type="similarity">
    <text evidence="3">Belongs to the non-flavoprotein flavin reductase family. HpaC subfamily.</text>
</comment>
<proteinExistence type="evidence at protein level"/>
<feature type="chain" id="PRO_0000387997" description="4-hydroxyphenylacetate 3-monooxygenase, reductase component">
    <location>
        <begin position="1"/>
        <end position="149"/>
    </location>
</feature>
<feature type="binding site" evidence="1 5">
    <location>
        <begin position="27"/>
        <end position="34"/>
    </location>
    <ligand>
        <name>FAD</name>
        <dbReference type="ChEBI" id="CHEBI:57692"/>
    </ligand>
</feature>
<feature type="binding site" evidence="1 5">
    <location>
        <position position="37"/>
    </location>
    <ligand>
        <name>NAD(+)</name>
        <dbReference type="ChEBI" id="CHEBI:57540"/>
    </ligand>
</feature>
<feature type="binding site" evidence="1 5">
    <location>
        <begin position="48"/>
        <end position="50"/>
    </location>
    <ligand>
        <name>FAD</name>
        <dbReference type="ChEBI" id="CHEBI:57692"/>
    </ligand>
</feature>
<feature type="binding site" evidence="1 5">
    <location>
        <begin position="54"/>
        <end position="55"/>
    </location>
    <ligand>
        <name>FAD</name>
        <dbReference type="ChEBI" id="CHEBI:57692"/>
    </ligand>
</feature>
<feature type="binding site" evidence="1 5">
    <location>
        <position position="80"/>
    </location>
    <ligand>
        <name>FAD</name>
        <dbReference type="ChEBI" id="CHEBI:57692"/>
    </ligand>
</feature>
<feature type="binding site" evidence="1 5">
    <location>
        <position position="116"/>
    </location>
    <ligand>
        <name>NAD(+)</name>
        <dbReference type="ChEBI" id="CHEBI:57540"/>
    </ligand>
</feature>
<feature type="binding site" evidence="1 5">
    <location>
        <begin position="137"/>
        <end position="140"/>
    </location>
    <ligand>
        <name>NAD(+)</name>
        <dbReference type="ChEBI" id="CHEBI:57540"/>
    </ligand>
</feature>
<feature type="helix" evidence="6">
    <location>
        <begin position="3"/>
        <end position="10"/>
    </location>
</feature>
<feature type="strand" evidence="6">
    <location>
        <begin position="17"/>
        <end position="23"/>
    </location>
</feature>
<feature type="strand" evidence="6">
    <location>
        <begin position="26"/>
        <end position="33"/>
    </location>
</feature>
<feature type="strand" evidence="6">
    <location>
        <begin position="35"/>
        <end position="39"/>
    </location>
</feature>
<feature type="turn" evidence="6">
    <location>
        <begin position="40"/>
        <end position="43"/>
    </location>
</feature>
<feature type="strand" evidence="6">
    <location>
        <begin position="44"/>
        <end position="50"/>
    </location>
</feature>
<feature type="helix" evidence="6">
    <location>
        <begin position="55"/>
        <end position="62"/>
    </location>
</feature>
<feature type="strand" evidence="6">
    <location>
        <begin position="64"/>
        <end position="69"/>
    </location>
</feature>
<feature type="helix" evidence="6">
    <location>
        <begin position="75"/>
        <end position="80"/>
    </location>
</feature>
<feature type="turn" evidence="6">
    <location>
        <begin position="81"/>
        <end position="83"/>
    </location>
</feature>
<feature type="strand" evidence="6">
    <location>
        <begin position="100"/>
        <end position="113"/>
    </location>
</feature>
<feature type="strand" evidence="6">
    <location>
        <begin position="116"/>
        <end position="128"/>
    </location>
</feature>
<feature type="strand" evidence="6">
    <location>
        <begin position="139"/>
        <end position="143"/>
    </location>
</feature>
<sequence>MKEAFKEALARFASGVTVVAARLGEEERGMTATAFMSLSLEPPLVALAVSERAKLLPVLEGAGAFTVSLLREGQEAVSEHFAGRPKEGIALEEGRVKGALAVLRCRLHALYPGGDHRIVVGLVEEVELGEEGPPLVYFQRGYRRLVWPS</sequence>
<name>HPAC_THET8</name>